<feature type="chain" id="PRO_1000196076" description="Large ribosomal subunit protein bL34">
    <location>
        <begin position="1"/>
        <end position="44"/>
    </location>
</feature>
<feature type="region of interest" description="Disordered" evidence="2">
    <location>
        <begin position="1"/>
        <end position="44"/>
    </location>
</feature>
<comment type="similarity">
    <text evidence="1">Belongs to the bacterial ribosomal protein bL34 family.</text>
</comment>
<proteinExistence type="inferred from homology"/>
<name>RL34_NAUPA</name>
<dbReference type="EMBL" id="CP001279">
    <property type="protein sequence ID" value="ACM92689.1"/>
    <property type="molecule type" value="Genomic_DNA"/>
</dbReference>
<dbReference type="RefSeq" id="WP_015901741.1">
    <property type="nucleotide sequence ID" value="NC_012115.1"/>
</dbReference>
<dbReference type="SMR" id="B9L9D4"/>
<dbReference type="STRING" id="598659.NAMH_0839"/>
<dbReference type="KEGG" id="nam:NAMH_0839"/>
<dbReference type="eggNOG" id="COG0230">
    <property type="taxonomic scope" value="Bacteria"/>
</dbReference>
<dbReference type="HOGENOM" id="CLU_129938_2_0_7"/>
<dbReference type="Proteomes" id="UP000000448">
    <property type="component" value="Chromosome"/>
</dbReference>
<dbReference type="GO" id="GO:1990904">
    <property type="term" value="C:ribonucleoprotein complex"/>
    <property type="evidence" value="ECO:0007669"/>
    <property type="project" value="UniProtKB-KW"/>
</dbReference>
<dbReference type="GO" id="GO:0005840">
    <property type="term" value="C:ribosome"/>
    <property type="evidence" value="ECO:0007669"/>
    <property type="project" value="UniProtKB-KW"/>
</dbReference>
<dbReference type="GO" id="GO:0003735">
    <property type="term" value="F:structural constituent of ribosome"/>
    <property type="evidence" value="ECO:0007669"/>
    <property type="project" value="InterPro"/>
</dbReference>
<dbReference type="GO" id="GO:0006412">
    <property type="term" value="P:translation"/>
    <property type="evidence" value="ECO:0007669"/>
    <property type="project" value="UniProtKB-UniRule"/>
</dbReference>
<dbReference type="FunFam" id="1.10.287.3980:FF:000001">
    <property type="entry name" value="Mitochondrial ribosomal protein L34"/>
    <property type="match status" value="1"/>
</dbReference>
<dbReference type="Gene3D" id="1.10.287.3980">
    <property type="match status" value="1"/>
</dbReference>
<dbReference type="HAMAP" id="MF_00391">
    <property type="entry name" value="Ribosomal_bL34"/>
    <property type="match status" value="1"/>
</dbReference>
<dbReference type="InterPro" id="IPR000271">
    <property type="entry name" value="Ribosomal_bL34"/>
</dbReference>
<dbReference type="InterPro" id="IPR020939">
    <property type="entry name" value="Ribosomal_bL34_CS"/>
</dbReference>
<dbReference type="NCBIfam" id="TIGR01030">
    <property type="entry name" value="rpmH_bact"/>
    <property type="match status" value="1"/>
</dbReference>
<dbReference type="PANTHER" id="PTHR14503:SF4">
    <property type="entry name" value="LARGE RIBOSOMAL SUBUNIT PROTEIN BL34M"/>
    <property type="match status" value="1"/>
</dbReference>
<dbReference type="PANTHER" id="PTHR14503">
    <property type="entry name" value="MITOCHONDRIAL RIBOSOMAL PROTEIN 34 FAMILY MEMBER"/>
    <property type="match status" value="1"/>
</dbReference>
<dbReference type="Pfam" id="PF00468">
    <property type="entry name" value="Ribosomal_L34"/>
    <property type="match status" value="1"/>
</dbReference>
<dbReference type="PROSITE" id="PS00784">
    <property type="entry name" value="RIBOSOMAL_L34"/>
    <property type="match status" value="1"/>
</dbReference>
<reference key="1">
    <citation type="journal article" date="2009" name="PLoS Genet.">
        <title>Adaptations to submarine hydrothermal environments exemplified by the genome of Nautilia profundicola.</title>
        <authorList>
            <person name="Campbell B.J."/>
            <person name="Smith J.L."/>
            <person name="Hanson T.E."/>
            <person name="Klotz M.G."/>
            <person name="Stein L.Y."/>
            <person name="Lee C.K."/>
            <person name="Wu D."/>
            <person name="Robinson J.M."/>
            <person name="Khouri H.M."/>
            <person name="Eisen J.A."/>
            <person name="Cary S.C."/>
        </authorList>
    </citation>
    <scope>NUCLEOTIDE SEQUENCE [LARGE SCALE GENOMIC DNA]</scope>
    <source>
        <strain>ATCC BAA-1463 / DSM 18972 / AmH</strain>
    </source>
</reference>
<accession>B9L9D4</accession>
<gene>
    <name evidence="1" type="primary">rpmH</name>
    <name type="ordered locus">NAMH_0839</name>
</gene>
<protein>
    <recommendedName>
        <fullName evidence="1">Large ribosomal subunit protein bL34</fullName>
    </recommendedName>
    <alternativeName>
        <fullName evidence="3">50S ribosomal protein L34</fullName>
    </alternativeName>
</protein>
<sequence length="44" mass="5332">MKRTYQPSKIRRKRTHGFRARLKTKNGRKVLARRRAKGRKRLAV</sequence>
<evidence type="ECO:0000255" key="1">
    <source>
        <dbReference type="HAMAP-Rule" id="MF_00391"/>
    </source>
</evidence>
<evidence type="ECO:0000256" key="2">
    <source>
        <dbReference type="SAM" id="MobiDB-lite"/>
    </source>
</evidence>
<evidence type="ECO:0000305" key="3"/>
<keyword id="KW-0687">Ribonucleoprotein</keyword>
<keyword id="KW-0689">Ribosomal protein</keyword>
<organism>
    <name type="scientific">Nautilia profundicola (strain ATCC BAA-1463 / DSM 18972 / AmH)</name>
    <dbReference type="NCBI Taxonomy" id="598659"/>
    <lineage>
        <taxon>Bacteria</taxon>
        <taxon>Pseudomonadati</taxon>
        <taxon>Campylobacterota</taxon>
        <taxon>Epsilonproteobacteria</taxon>
        <taxon>Nautiliales</taxon>
        <taxon>Nautiliaceae</taxon>
        <taxon>Nautilia</taxon>
    </lineage>
</organism>